<protein>
    <recommendedName>
        <fullName evidence="1">dCTP deaminase</fullName>
        <ecNumber evidence="1">3.5.4.13</ecNumber>
    </recommendedName>
    <alternativeName>
        <fullName evidence="1">Deoxycytidine triphosphate deaminase</fullName>
    </alternativeName>
</protein>
<comment type="function">
    <text evidence="1">Catalyzes the deamination of dCTP to dUTP.</text>
</comment>
<comment type="catalytic activity">
    <reaction evidence="1">
        <text>dCTP + H2O + H(+) = dUTP + NH4(+)</text>
        <dbReference type="Rhea" id="RHEA:22680"/>
        <dbReference type="ChEBI" id="CHEBI:15377"/>
        <dbReference type="ChEBI" id="CHEBI:15378"/>
        <dbReference type="ChEBI" id="CHEBI:28938"/>
        <dbReference type="ChEBI" id="CHEBI:61481"/>
        <dbReference type="ChEBI" id="CHEBI:61555"/>
        <dbReference type="EC" id="3.5.4.13"/>
    </reaction>
</comment>
<comment type="pathway">
    <text evidence="1">Pyrimidine metabolism; dUMP biosynthesis; dUMP from dCTP (dUTP route): step 1/2.</text>
</comment>
<comment type="subunit">
    <text evidence="1">Homotrimer.</text>
</comment>
<comment type="similarity">
    <text evidence="1">Belongs to the dCTP deaminase family.</text>
</comment>
<keyword id="KW-0378">Hydrolase</keyword>
<keyword id="KW-0546">Nucleotide metabolism</keyword>
<keyword id="KW-0547">Nucleotide-binding</keyword>
<keyword id="KW-1185">Reference proteome</keyword>
<gene>
    <name evidence="1" type="primary">dcd</name>
    <name type="ordered locus">ECS88_2164</name>
</gene>
<reference key="1">
    <citation type="journal article" date="2009" name="PLoS Genet.">
        <title>Organised genome dynamics in the Escherichia coli species results in highly diverse adaptive paths.</title>
        <authorList>
            <person name="Touchon M."/>
            <person name="Hoede C."/>
            <person name="Tenaillon O."/>
            <person name="Barbe V."/>
            <person name="Baeriswyl S."/>
            <person name="Bidet P."/>
            <person name="Bingen E."/>
            <person name="Bonacorsi S."/>
            <person name="Bouchier C."/>
            <person name="Bouvet O."/>
            <person name="Calteau A."/>
            <person name="Chiapello H."/>
            <person name="Clermont O."/>
            <person name="Cruveiller S."/>
            <person name="Danchin A."/>
            <person name="Diard M."/>
            <person name="Dossat C."/>
            <person name="Karoui M.E."/>
            <person name="Frapy E."/>
            <person name="Garry L."/>
            <person name="Ghigo J.M."/>
            <person name="Gilles A.M."/>
            <person name="Johnson J."/>
            <person name="Le Bouguenec C."/>
            <person name="Lescat M."/>
            <person name="Mangenot S."/>
            <person name="Martinez-Jehanne V."/>
            <person name="Matic I."/>
            <person name="Nassif X."/>
            <person name="Oztas S."/>
            <person name="Petit M.A."/>
            <person name="Pichon C."/>
            <person name="Rouy Z."/>
            <person name="Ruf C.S."/>
            <person name="Schneider D."/>
            <person name="Tourret J."/>
            <person name="Vacherie B."/>
            <person name="Vallenet D."/>
            <person name="Medigue C."/>
            <person name="Rocha E.P.C."/>
            <person name="Denamur E."/>
        </authorList>
    </citation>
    <scope>NUCLEOTIDE SEQUENCE [LARGE SCALE GENOMIC DNA]</scope>
    <source>
        <strain>S88 / ExPEC</strain>
    </source>
</reference>
<feature type="chain" id="PRO_1000189828" description="dCTP deaminase">
    <location>
        <begin position="1"/>
        <end position="193"/>
    </location>
</feature>
<feature type="region of interest" description="Disordered" evidence="2">
    <location>
        <begin position="169"/>
        <end position="193"/>
    </location>
</feature>
<feature type="active site" description="Proton donor/acceptor" evidence="1">
    <location>
        <position position="138"/>
    </location>
</feature>
<feature type="binding site" evidence="1">
    <location>
        <begin position="110"/>
        <end position="115"/>
    </location>
    <ligand>
        <name>dCTP</name>
        <dbReference type="ChEBI" id="CHEBI:61481"/>
    </ligand>
</feature>
<feature type="binding site" evidence="1">
    <location>
        <position position="128"/>
    </location>
    <ligand>
        <name>dCTP</name>
        <dbReference type="ChEBI" id="CHEBI:61481"/>
    </ligand>
</feature>
<feature type="binding site" evidence="1">
    <location>
        <begin position="136"/>
        <end position="138"/>
    </location>
    <ligand>
        <name>dCTP</name>
        <dbReference type="ChEBI" id="CHEBI:61481"/>
    </ligand>
</feature>
<feature type="binding site" evidence="1">
    <location>
        <position position="171"/>
    </location>
    <ligand>
        <name>dCTP</name>
        <dbReference type="ChEBI" id="CHEBI:61481"/>
    </ligand>
</feature>
<feature type="binding site" evidence="1">
    <location>
        <position position="178"/>
    </location>
    <ligand>
        <name>dCTP</name>
        <dbReference type="ChEBI" id="CHEBI:61481"/>
    </ligand>
</feature>
<feature type="binding site" evidence="1">
    <location>
        <position position="182"/>
    </location>
    <ligand>
        <name>dCTP</name>
        <dbReference type="ChEBI" id="CHEBI:61481"/>
    </ligand>
</feature>
<name>DCD_ECO45</name>
<dbReference type="EC" id="3.5.4.13" evidence="1"/>
<dbReference type="EMBL" id="CU928161">
    <property type="protein sequence ID" value="CAR03451.1"/>
    <property type="molecule type" value="Genomic_DNA"/>
</dbReference>
<dbReference type="RefSeq" id="WP_001234777.1">
    <property type="nucleotide sequence ID" value="NC_011742.1"/>
</dbReference>
<dbReference type="SMR" id="B7ME78"/>
<dbReference type="KEGG" id="ecz:ECS88_2164"/>
<dbReference type="HOGENOM" id="CLU_087476_2_0_6"/>
<dbReference type="UniPathway" id="UPA00610">
    <property type="reaction ID" value="UER00665"/>
</dbReference>
<dbReference type="Proteomes" id="UP000000747">
    <property type="component" value="Chromosome"/>
</dbReference>
<dbReference type="GO" id="GO:0008829">
    <property type="term" value="F:dCTP deaminase activity"/>
    <property type="evidence" value="ECO:0007669"/>
    <property type="project" value="UniProtKB-UniRule"/>
</dbReference>
<dbReference type="GO" id="GO:0000166">
    <property type="term" value="F:nucleotide binding"/>
    <property type="evidence" value="ECO:0007669"/>
    <property type="project" value="UniProtKB-KW"/>
</dbReference>
<dbReference type="GO" id="GO:0006226">
    <property type="term" value="P:dUMP biosynthetic process"/>
    <property type="evidence" value="ECO:0007669"/>
    <property type="project" value="UniProtKB-UniPathway"/>
</dbReference>
<dbReference type="GO" id="GO:0006229">
    <property type="term" value="P:dUTP biosynthetic process"/>
    <property type="evidence" value="ECO:0007669"/>
    <property type="project" value="UniProtKB-UniRule"/>
</dbReference>
<dbReference type="GO" id="GO:0015949">
    <property type="term" value="P:nucleobase-containing small molecule interconversion"/>
    <property type="evidence" value="ECO:0007669"/>
    <property type="project" value="TreeGrafter"/>
</dbReference>
<dbReference type="CDD" id="cd07557">
    <property type="entry name" value="trimeric_dUTPase"/>
    <property type="match status" value="1"/>
</dbReference>
<dbReference type="FunFam" id="2.70.40.10:FF:000003">
    <property type="entry name" value="dCTP deaminase"/>
    <property type="match status" value="1"/>
</dbReference>
<dbReference type="Gene3D" id="2.70.40.10">
    <property type="match status" value="1"/>
</dbReference>
<dbReference type="HAMAP" id="MF_00146">
    <property type="entry name" value="dCTP_deaminase"/>
    <property type="match status" value="1"/>
</dbReference>
<dbReference type="InterPro" id="IPR011962">
    <property type="entry name" value="dCTP_deaminase"/>
</dbReference>
<dbReference type="InterPro" id="IPR036157">
    <property type="entry name" value="dUTPase-like_sf"/>
</dbReference>
<dbReference type="InterPro" id="IPR033704">
    <property type="entry name" value="dUTPase_trimeric"/>
</dbReference>
<dbReference type="NCBIfam" id="TIGR02274">
    <property type="entry name" value="dCTP_deam"/>
    <property type="match status" value="1"/>
</dbReference>
<dbReference type="PANTHER" id="PTHR42680">
    <property type="entry name" value="DCTP DEAMINASE"/>
    <property type="match status" value="1"/>
</dbReference>
<dbReference type="PANTHER" id="PTHR42680:SF3">
    <property type="entry name" value="DCTP DEAMINASE"/>
    <property type="match status" value="1"/>
</dbReference>
<dbReference type="Pfam" id="PF22769">
    <property type="entry name" value="DCD"/>
    <property type="match status" value="1"/>
</dbReference>
<dbReference type="SUPFAM" id="SSF51283">
    <property type="entry name" value="dUTPase-like"/>
    <property type="match status" value="1"/>
</dbReference>
<accession>B7ME78</accession>
<organism>
    <name type="scientific">Escherichia coli O45:K1 (strain S88 / ExPEC)</name>
    <dbReference type="NCBI Taxonomy" id="585035"/>
    <lineage>
        <taxon>Bacteria</taxon>
        <taxon>Pseudomonadati</taxon>
        <taxon>Pseudomonadota</taxon>
        <taxon>Gammaproteobacteria</taxon>
        <taxon>Enterobacterales</taxon>
        <taxon>Enterobacteriaceae</taxon>
        <taxon>Escherichia</taxon>
    </lineage>
</organism>
<sequence length="193" mass="21251">MRLCDRDIEAWLDEGRLSINPRPPVERINGATVDVRLGNKFRTFRGHTAAFIDLSGPKDEVSAALDRVMSDEIVLDESEAFYLHPGELALAVTLESVTLPADLVGWLDGRSSLARLGLMVHVTAHRIDPGWSGCIVLEFYNSGKLPLALRPGMLIGALSFEPLSGPAARPYNRREDAKYRNQQGAVASRIDKD</sequence>
<evidence type="ECO:0000255" key="1">
    <source>
        <dbReference type="HAMAP-Rule" id="MF_00146"/>
    </source>
</evidence>
<evidence type="ECO:0000256" key="2">
    <source>
        <dbReference type="SAM" id="MobiDB-lite"/>
    </source>
</evidence>
<proteinExistence type="inferred from homology"/>